<reference key="1">
    <citation type="journal article" date="2010" name="ISME J.">
        <title>The complete genome sequence of the algal symbiont Dinoroseobacter shibae: a hitchhiker's guide to life in the sea.</title>
        <authorList>
            <person name="Wagner-Dobler I."/>
            <person name="Ballhausen B."/>
            <person name="Berger M."/>
            <person name="Brinkhoff T."/>
            <person name="Buchholz I."/>
            <person name="Bunk B."/>
            <person name="Cypionka H."/>
            <person name="Daniel R."/>
            <person name="Drepper T."/>
            <person name="Gerdts G."/>
            <person name="Hahnke S."/>
            <person name="Han C."/>
            <person name="Jahn D."/>
            <person name="Kalhoefer D."/>
            <person name="Kiss H."/>
            <person name="Klenk H.P."/>
            <person name="Kyrpides N."/>
            <person name="Liebl W."/>
            <person name="Liesegang H."/>
            <person name="Meincke L."/>
            <person name="Pati A."/>
            <person name="Petersen J."/>
            <person name="Piekarski T."/>
            <person name="Pommerenke C."/>
            <person name="Pradella S."/>
            <person name="Pukall R."/>
            <person name="Rabus R."/>
            <person name="Stackebrandt E."/>
            <person name="Thole S."/>
            <person name="Thompson L."/>
            <person name="Tielen P."/>
            <person name="Tomasch J."/>
            <person name="von Jan M."/>
            <person name="Wanphrut N."/>
            <person name="Wichels A."/>
            <person name="Zech H."/>
            <person name="Simon M."/>
        </authorList>
    </citation>
    <scope>NUCLEOTIDE SEQUENCE [LARGE SCALE GENOMIC DNA]</scope>
    <source>
        <strain>DSM 16493 / NCIMB 14021 / DFL 12</strain>
    </source>
</reference>
<protein>
    <recommendedName>
        <fullName evidence="1">Phosphoglycerate kinase</fullName>
        <ecNumber evidence="1">2.7.2.3</ecNumber>
    </recommendedName>
</protein>
<keyword id="KW-0067">ATP-binding</keyword>
<keyword id="KW-0963">Cytoplasm</keyword>
<keyword id="KW-0324">Glycolysis</keyword>
<keyword id="KW-0418">Kinase</keyword>
<keyword id="KW-0547">Nucleotide-binding</keyword>
<keyword id="KW-1185">Reference proteome</keyword>
<keyword id="KW-0808">Transferase</keyword>
<proteinExistence type="inferred from homology"/>
<organism>
    <name type="scientific">Dinoroseobacter shibae (strain DSM 16493 / NCIMB 14021 / DFL 12)</name>
    <dbReference type="NCBI Taxonomy" id="398580"/>
    <lineage>
        <taxon>Bacteria</taxon>
        <taxon>Pseudomonadati</taxon>
        <taxon>Pseudomonadota</taxon>
        <taxon>Alphaproteobacteria</taxon>
        <taxon>Rhodobacterales</taxon>
        <taxon>Roseobacteraceae</taxon>
        <taxon>Dinoroseobacter</taxon>
    </lineage>
</organism>
<sequence length="393" mass="40805">MTWKTLDDMALDGKIVLTRVDINVPVADGVVTDTTRIERIVPTVTDILAKGGLPVLLAHFGRPKGKVVPEMSLRVVLPALEEALGRPVEFIAHPDRAALEALPKCTVVLAENTRFAPGEEKNDPEMAAALAALGDIYCNDAFSAAHRAHASTEGIARLLPSCAGRLMQAELEALQRALGTPTRPVVAVVGGAKVSTKLALLGNLVEKVDDLVIGGGMANTFLAAQGIDVGASLAEHEMADTAREIMEKAARAGCSIHLPKDIVVARKFEAGAPSQTLPVSECPRDAMILDAGPETVAALKEVFAQARTLIWNGPLGAFEIPPFDMATNAAARAAADATKAGTLITVAGGGDTVAALNKAGVADDFTYISTAGGAFLEWMEGKTLPGVAALEAA</sequence>
<comment type="catalytic activity">
    <reaction evidence="1">
        <text>(2R)-3-phosphoglycerate + ATP = (2R)-3-phospho-glyceroyl phosphate + ADP</text>
        <dbReference type="Rhea" id="RHEA:14801"/>
        <dbReference type="ChEBI" id="CHEBI:30616"/>
        <dbReference type="ChEBI" id="CHEBI:57604"/>
        <dbReference type="ChEBI" id="CHEBI:58272"/>
        <dbReference type="ChEBI" id="CHEBI:456216"/>
        <dbReference type="EC" id="2.7.2.3"/>
    </reaction>
</comment>
<comment type="pathway">
    <text evidence="1">Carbohydrate degradation; glycolysis; pyruvate from D-glyceraldehyde 3-phosphate: step 2/5.</text>
</comment>
<comment type="subunit">
    <text evidence="1">Monomer.</text>
</comment>
<comment type="subcellular location">
    <subcellularLocation>
        <location evidence="1">Cytoplasm</location>
    </subcellularLocation>
</comment>
<comment type="similarity">
    <text evidence="1">Belongs to the phosphoglycerate kinase family.</text>
</comment>
<accession>A8LQM4</accession>
<name>PGK_DINSH</name>
<gene>
    <name evidence="1" type="primary">pgk</name>
    <name type="ordered locus">Dshi_2155</name>
</gene>
<evidence type="ECO:0000255" key="1">
    <source>
        <dbReference type="HAMAP-Rule" id="MF_00145"/>
    </source>
</evidence>
<feature type="chain" id="PRO_1000076586" description="Phosphoglycerate kinase">
    <location>
        <begin position="1"/>
        <end position="393"/>
    </location>
</feature>
<feature type="binding site" evidence="1">
    <location>
        <begin position="21"/>
        <end position="23"/>
    </location>
    <ligand>
        <name>substrate</name>
    </ligand>
</feature>
<feature type="binding site" evidence="1">
    <location>
        <position position="36"/>
    </location>
    <ligand>
        <name>substrate</name>
    </ligand>
</feature>
<feature type="binding site" evidence="1">
    <location>
        <begin position="59"/>
        <end position="62"/>
    </location>
    <ligand>
        <name>substrate</name>
    </ligand>
</feature>
<feature type="binding site" evidence="1">
    <location>
        <position position="114"/>
    </location>
    <ligand>
        <name>substrate</name>
    </ligand>
</feature>
<feature type="binding site" evidence="1">
    <location>
        <position position="147"/>
    </location>
    <ligand>
        <name>substrate</name>
    </ligand>
</feature>
<feature type="binding site" evidence="1">
    <location>
        <position position="197"/>
    </location>
    <ligand>
        <name>ATP</name>
        <dbReference type="ChEBI" id="CHEBI:30616"/>
    </ligand>
</feature>
<feature type="binding site" evidence="1">
    <location>
        <position position="319"/>
    </location>
    <ligand>
        <name>ATP</name>
        <dbReference type="ChEBI" id="CHEBI:30616"/>
    </ligand>
</feature>
<feature type="binding site" evidence="1">
    <location>
        <begin position="349"/>
        <end position="352"/>
    </location>
    <ligand>
        <name>ATP</name>
        <dbReference type="ChEBI" id="CHEBI:30616"/>
    </ligand>
</feature>
<dbReference type="EC" id="2.7.2.3" evidence="1"/>
<dbReference type="EMBL" id="CP000830">
    <property type="protein sequence ID" value="ABV93891.1"/>
    <property type="molecule type" value="Genomic_DNA"/>
</dbReference>
<dbReference type="RefSeq" id="WP_012178823.1">
    <property type="nucleotide sequence ID" value="NC_009952.1"/>
</dbReference>
<dbReference type="SMR" id="A8LQM4"/>
<dbReference type="STRING" id="398580.Dshi_2155"/>
<dbReference type="KEGG" id="dsh:Dshi_2155"/>
<dbReference type="eggNOG" id="COG0126">
    <property type="taxonomic scope" value="Bacteria"/>
</dbReference>
<dbReference type="HOGENOM" id="CLU_025427_0_2_5"/>
<dbReference type="OrthoDB" id="9808460at2"/>
<dbReference type="UniPathway" id="UPA00109">
    <property type="reaction ID" value="UER00185"/>
</dbReference>
<dbReference type="Proteomes" id="UP000006833">
    <property type="component" value="Chromosome"/>
</dbReference>
<dbReference type="GO" id="GO:0005829">
    <property type="term" value="C:cytosol"/>
    <property type="evidence" value="ECO:0007669"/>
    <property type="project" value="TreeGrafter"/>
</dbReference>
<dbReference type="GO" id="GO:0043531">
    <property type="term" value="F:ADP binding"/>
    <property type="evidence" value="ECO:0007669"/>
    <property type="project" value="TreeGrafter"/>
</dbReference>
<dbReference type="GO" id="GO:0005524">
    <property type="term" value="F:ATP binding"/>
    <property type="evidence" value="ECO:0007669"/>
    <property type="project" value="UniProtKB-KW"/>
</dbReference>
<dbReference type="GO" id="GO:0004618">
    <property type="term" value="F:phosphoglycerate kinase activity"/>
    <property type="evidence" value="ECO:0007669"/>
    <property type="project" value="UniProtKB-UniRule"/>
</dbReference>
<dbReference type="GO" id="GO:0006094">
    <property type="term" value="P:gluconeogenesis"/>
    <property type="evidence" value="ECO:0007669"/>
    <property type="project" value="TreeGrafter"/>
</dbReference>
<dbReference type="GO" id="GO:0006096">
    <property type="term" value="P:glycolytic process"/>
    <property type="evidence" value="ECO:0007669"/>
    <property type="project" value="UniProtKB-UniRule"/>
</dbReference>
<dbReference type="FunFam" id="3.40.50.1260:FF:000007">
    <property type="entry name" value="Phosphoglycerate kinase"/>
    <property type="match status" value="1"/>
</dbReference>
<dbReference type="Gene3D" id="3.40.50.1260">
    <property type="entry name" value="Phosphoglycerate kinase, N-terminal domain"/>
    <property type="match status" value="2"/>
</dbReference>
<dbReference type="HAMAP" id="MF_00145">
    <property type="entry name" value="Phosphoglyc_kinase"/>
    <property type="match status" value="1"/>
</dbReference>
<dbReference type="InterPro" id="IPR001576">
    <property type="entry name" value="Phosphoglycerate_kinase"/>
</dbReference>
<dbReference type="InterPro" id="IPR015824">
    <property type="entry name" value="Phosphoglycerate_kinase_N"/>
</dbReference>
<dbReference type="InterPro" id="IPR036043">
    <property type="entry name" value="Phosphoglycerate_kinase_sf"/>
</dbReference>
<dbReference type="PANTHER" id="PTHR11406">
    <property type="entry name" value="PHOSPHOGLYCERATE KINASE"/>
    <property type="match status" value="1"/>
</dbReference>
<dbReference type="PANTHER" id="PTHR11406:SF23">
    <property type="entry name" value="PHOSPHOGLYCERATE KINASE 1, CHLOROPLASTIC-RELATED"/>
    <property type="match status" value="1"/>
</dbReference>
<dbReference type="Pfam" id="PF00162">
    <property type="entry name" value="PGK"/>
    <property type="match status" value="1"/>
</dbReference>
<dbReference type="PIRSF" id="PIRSF000724">
    <property type="entry name" value="Pgk"/>
    <property type="match status" value="1"/>
</dbReference>
<dbReference type="PRINTS" id="PR00477">
    <property type="entry name" value="PHGLYCKINASE"/>
</dbReference>
<dbReference type="SUPFAM" id="SSF53748">
    <property type="entry name" value="Phosphoglycerate kinase"/>
    <property type="match status" value="1"/>
</dbReference>